<dbReference type="EC" id="3.4.-.-" evidence="1"/>
<dbReference type="EMBL" id="AM295250">
    <property type="protein sequence ID" value="CAL28450.1"/>
    <property type="molecule type" value="Genomic_DNA"/>
</dbReference>
<dbReference type="RefSeq" id="WP_015900790.1">
    <property type="nucleotide sequence ID" value="NC_012121.1"/>
</dbReference>
<dbReference type="SMR" id="B9DML4"/>
<dbReference type="MEROPS" id="C75.001"/>
<dbReference type="GeneID" id="93793996"/>
<dbReference type="KEGG" id="sca:SCA_1545"/>
<dbReference type="eggNOG" id="COG4512">
    <property type="taxonomic scope" value="Bacteria"/>
</dbReference>
<dbReference type="HOGENOM" id="CLU_098969_2_2_9"/>
<dbReference type="OrthoDB" id="2183538at2"/>
<dbReference type="BioCyc" id="SCAR396513:SCA_RS07835-MONOMER"/>
<dbReference type="Proteomes" id="UP000000444">
    <property type="component" value="Chromosome"/>
</dbReference>
<dbReference type="GO" id="GO:0005886">
    <property type="term" value="C:plasma membrane"/>
    <property type="evidence" value="ECO:0007669"/>
    <property type="project" value="UniProtKB-SubCell"/>
</dbReference>
<dbReference type="GO" id="GO:0008233">
    <property type="term" value="F:peptidase activity"/>
    <property type="evidence" value="ECO:0007669"/>
    <property type="project" value="UniProtKB-UniRule"/>
</dbReference>
<dbReference type="GO" id="GO:0006508">
    <property type="term" value="P:proteolysis"/>
    <property type="evidence" value="ECO:0007669"/>
    <property type="project" value="UniProtKB-KW"/>
</dbReference>
<dbReference type="GO" id="GO:0009372">
    <property type="term" value="P:quorum sensing"/>
    <property type="evidence" value="ECO:0007669"/>
    <property type="project" value="UniProtKB-UniRule"/>
</dbReference>
<dbReference type="HAMAP" id="MF_00784">
    <property type="entry name" value="AgrB"/>
    <property type="match status" value="1"/>
</dbReference>
<dbReference type="InterPro" id="IPR006741">
    <property type="entry name" value="AgrB"/>
</dbReference>
<dbReference type="Pfam" id="PF04647">
    <property type="entry name" value="AgrB"/>
    <property type="match status" value="1"/>
</dbReference>
<dbReference type="SMART" id="SM00793">
    <property type="entry name" value="AgrB"/>
    <property type="match status" value="1"/>
</dbReference>
<proteinExistence type="inferred from homology"/>
<evidence type="ECO:0000255" key="1">
    <source>
        <dbReference type="HAMAP-Rule" id="MF_00784"/>
    </source>
</evidence>
<accession>B9DML4</accession>
<keyword id="KW-1003">Cell membrane</keyword>
<keyword id="KW-0378">Hydrolase</keyword>
<keyword id="KW-0472">Membrane</keyword>
<keyword id="KW-0645">Protease</keyword>
<keyword id="KW-0673">Quorum sensing</keyword>
<keyword id="KW-1185">Reference proteome</keyword>
<keyword id="KW-0812">Transmembrane</keyword>
<keyword id="KW-1133">Transmembrane helix</keyword>
<keyword id="KW-0843">Virulence</keyword>
<name>AGRB_STACT</name>
<gene>
    <name evidence="1" type="primary">agrB</name>
    <name type="ordered locus">Sca_1545</name>
</gene>
<reference key="1">
    <citation type="journal article" date="2009" name="Appl. Environ. Microbiol.">
        <title>Genome analysis of the meat starter culture bacterium Staphylococcus carnosus TM300.</title>
        <authorList>
            <person name="Rosenstein R."/>
            <person name="Nerz C."/>
            <person name="Biswas L."/>
            <person name="Resch A."/>
            <person name="Raddatz G."/>
            <person name="Schuster S.C."/>
            <person name="Goetz F."/>
        </authorList>
    </citation>
    <scope>NUCLEOTIDE SEQUENCE [LARGE SCALE GENOMIC DNA]</scope>
    <source>
        <strain>TM300</strain>
    </source>
</reference>
<organism>
    <name type="scientific">Staphylococcus carnosus (strain TM300)</name>
    <dbReference type="NCBI Taxonomy" id="396513"/>
    <lineage>
        <taxon>Bacteria</taxon>
        <taxon>Bacillati</taxon>
        <taxon>Bacillota</taxon>
        <taxon>Bacilli</taxon>
        <taxon>Bacillales</taxon>
        <taxon>Staphylococcaceae</taxon>
        <taxon>Staphylococcus</taxon>
    </lineage>
</organism>
<comment type="function">
    <text evidence="1">Essential for the production of a quorum sensing system signal molecule, the autoinducing peptide (AIP). This quorum sensing system is responsible for the regulation of the expression of virulence factor genes. Involved in the proteolytic processing of AgrD, the precursor of AIP.</text>
</comment>
<comment type="subcellular location">
    <subcellularLocation>
        <location evidence="1">Cell membrane</location>
        <topology evidence="1">Multi-pass membrane protein</topology>
    </subcellularLocation>
</comment>
<comment type="similarity">
    <text evidence="1">Belongs to the AgrB family.</text>
</comment>
<sequence length="191" mass="21899">MQKVLERKIDAWAQALQKRNNLDRIAYLKIKLGLEVFFNNLFKTIVVYGLALLFHVFLYTLTVHLSYFAIRHYAHGAHAKSTFACYIESIILFVILPWILIKVDIPQIFMIVLAAVAFILICLYSPAITRKQPIPNHMRKKKKITAIFVAGILLIISFFIKQPFNELVQLGIVLIGAAQLPIFFPKQTKEG</sequence>
<feature type="chain" id="PRO_1000148474" description="Accessory gene regulator protein B">
    <location>
        <begin position="1"/>
        <end position="191"/>
    </location>
</feature>
<feature type="transmembrane region" description="Helical" evidence="1">
    <location>
        <begin position="45"/>
        <end position="65"/>
    </location>
</feature>
<feature type="transmembrane region" description="Helical" evidence="1">
    <location>
        <begin position="81"/>
        <end position="101"/>
    </location>
</feature>
<feature type="transmembrane region" description="Helical" evidence="1">
    <location>
        <begin position="108"/>
        <end position="128"/>
    </location>
</feature>
<feature type="transmembrane region" description="Helical" evidence="1">
    <location>
        <begin position="144"/>
        <end position="164"/>
    </location>
</feature>
<feature type="transmembrane region" description="Helical" evidence="1">
    <location>
        <begin position="165"/>
        <end position="185"/>
    </location>
</feature>
<protein>
    <recommendedName>
        <fullName evidence="1">Accessory gene regulator protein B</fullName>
        <ecNumber evidence="1">3.4.-.-</ecNumber>
    </recommendedName>
</protein>